<comment type="function">
    <text evidence="1">Catalyzes the reversible adenylation of nicotinate mononucleotide (NaMN) to nicotinic acid adenine dinucleotide (NaAD).</text>
</comment>
<comment type="catalytic activity">
    <reaction>
        <text>nicotinate beta-D-ribonucleotide + ATP + H(+) = deamido-NAD(+) + diphosphate</text>
        <dbReference type="Rhea" id="RHEA:22860"/>
        <dbReference type="ChEBI" id="CHEBI:15378"/>
        <dbReference type="ChEBI" id="CHEBI:30616"/>
        <dbReference type="ChEBI" id="CHEBI:33019"/>
        <dbReference type="ChEBI" id="CHEBI:57502"/>
        <dbReference type="ChEBI" id="CHEBI:58437"/>
        <dbReference type="EC" id="2.7.7.18"/>
    </reaction>
</comment>
<comment type="pathway">
    <text>Cofactor biosynthesis; NAD(+) biosynthesis; deamido-NAD(+) from nicotinate D-ribonucleotide: step 1/1.</text>
</comment>
<comment type="similarity">
    <text evidence="2">Belongs to the NadD family.</text>
</comment>
<keyword id="KW-0067">ATP-binding</keyword>
<keyword id="KW-0520">NAD</keyword>
<keyword id="KW-0547">Nucleotide-binding</keyword>
<keyword id="KW-0548">Nucleotidyltransferase</keyword>
<keyword id="KW-0662">Pyridine nucleotide biosynthesis</keyword>
<keyword id="KW-1185">Reference proteome</keyword>
<keyword id="KW-0808">Transferase</keyword>
<proteinExistence type="inferred from homology"/>
<dbReference type="EC" id="2.7.7.18"/>
<dbReference type="EMBL" id="BA000004">
    <property type="protein sequence ID" value="BAB05045.1"/>
    <property type="molecule type" value="Genomic_DNA"/>
</dbReference>
<dbReference type="PIR" id="F83815">
    <property type="entry name" value="F83815"/>
</dbReference>
<dbReference type="RefSeq" id="WP_010897493.1">
    <property type="nucleotide sequence ID" value="NC_002570.2"/>
</dbReference>
<dbReference type="SMR" id="Q9KD91"/>
<dbReference type="STRING" id="272558.gene:10727220"/>
<dbReference type="GeneID" id="87596948"/>
<dbReference type="KEGG" id="bha:BH1326"/>
<dbReference type="eggNOG" id="COG1057">
    <property type="taxonomic scope" value="Bacteria"/>
</dbReference>
<dbReference type="HOGENOM" id="CLU_069765_3_1_9"/>
<dbReference type="OrthoDB" id="5295945at2"/>
<dbReference type="UniPathway" id="UPA00253">
    <property type="reaction ID" value="UER00332"/>
</dbReference>
<dbReference type="Proteomes" id="UP000001258">
    <property type="component" value="Chromosome"/>
</dbReference>
<dbReference type="GO" id="GO:0005524">
    <property type="term" value="F:ATP binding"/>
    <property type="evidence" value="ECO:0007669"/>
    <property type="project" value="UniProtKB-KW"/>
</dbReference>
<dbReference type="GO" id="GO:0004515">
    <property type="term" value="F:nicotinate-nucleotide adenylyltransferase activity"/>
    <property type="evidence" value="ECO:0007669"/>
    <property type="project" value="UniProtKB-UniRule"/>
</dbReference>
<dbReference type="GO" id="GO:0009435">
    <property type="term" value="P:NAD biosynthetic process"/>
    <property type="evidence" value="ECO:0007669"/>
    <property type="project" value="UniProtKB-UniRule"/>
</dbReference>
<dbReference type="CDD" id="cd02165">
    <property type="entry name" value="NMNAT"/>
    <property type="match status" value="1"/>
</dbReference>
<dbReference type="Gene3D" id="3.40.50.620">
    <property type="entry name" value="HUPs"/>
    <property type="match status" value="1"/>
</dbReference>
<dbReference type="HAMAP" id="MF_00244">
    <property type="entry name" value="NaMN_adenylyltr"/>
    <property type="match status" value="1"/>
</dbReference>
<dbReference type="InterPro" id="IPR004821">
    <property type="entry name" value="Cyt_trans-like"/>
</dbReference>
<dbReference type="InterPro" id="IPR005248">
    <property type="entry name" value="NadD/NMNAT"/>
</dbReference>
<dbReference type="InterPro" id="IPR014729">
    <property type="entry name" value="Rossmann-like_a/b/a_fold"/>
</dbReference>
<dbReference type="NCBIfam" id="TIGR00125">
    <property type="entry name" value="cyt_tran_rel"/>
    <property type="match status" value="1"/>
</dbReference>
<dbReference type="NCBIfam" id="TIGR00482">
    <property type="entry name" value="nicotinate (nicotinamide) nucleotide adenylyltransferase"/>
    <property type="match status" value="1"/>
</dbReference>
<dbReference type="NCBIfam" id="NF000840">
    <property type="entry name" value="PRK00071.1-3"/>
    <property type="match status" value="1"/>
</dbReference>
<dbReference type="NCBIfam" id="NF000841">
    <property type="entry name" value="PRK00071.1-4"/>
    <property type="match status" value="1"/>
</dbReference>
<dbReference type="PANTHER" id="PTHR39321">
    <property type="entry name" value="NICOTINATE-NUCLEOTIDE ADENYLYLTRANSFERASE-RELATED"/>
    <property type="match status" value="1"/>
</dbReference>
<dbReference type="PANTHER" id="PTHR39321:SF3">
    <property type="entry name" value="PHOSPHOPANTETHEINE ADENYLYLTRANSFERASE"/>
    <property type="match status" value="1"/>
</dbReference>
<dbReference type="Pfam" id="PF01467">
    <property type="entry name" value="CTP_transf_like"/>
    <property type="match status" value="1"/>
</dbReference>
<dbReference type="SUPFAM" id="SSF52374">
    <property type="entry name" value="Nucleotidylyl transferase"/>
    <property type="match status" value="1"/>
</dbReference>
<reference key="1">
    <citation type="journal article" date="2000" name="Nucleic Acids Res.">
        <title>Complete genome sequence of the alkaliphilic bacterium Bacillus halodurans and genomic sequence comparison with Bacillus subtilis.</title>
        <authorList>
            <person name="Takami H."/>
            <person name="Nakasone K."/>
            <person name="Takaki Y."/>
            <person name="Maeno G."/>
            <person name="Sasaki R."/>
            <person name="Masui N."/>
            <person name="Fuji F."/>
            <person name="Hirama C."/>
            <person name="Nakamura Y."/>
            <person name="Ogasawara N."/>
            <person name="Kuhara S."/>
            <person name="Horikoshi K."/>
        </authorList>
    </citation>
    <scope>NUCLEOTIDE SEQUENCE [LARGE SCALE GENOMIC DNA]</scope>
    <source>
        <strain>ATCC BAA-125 / DSM 18197 / FERM 7344 / JCM 9153 / C-125</strain>
    </source>
</reference>
<gene>
    <name type="primary">nadD</name>
    <name type="ordered locus">BH1326</name>
</gene>
<sequence length="207" mass="23434">MKRIGLLGGTFDPPHIGHLLLAQEAIHCADLDEVWFVPVGIPPHKEREEIASNDDRLAMIKRAIKGKETLFNICTIELEREGKSYTIDTVRTLTKKHPDVRFFFIIGGDMVKSLPTWKGIDELLATVTFIGFKRPGVLLDSPYQDQLMLVEGPEVNVSSTMIRERMTEGKPISYLLPLDVERYIYEKGLYKTNESRKSPSVSKTSSN</sequence>
<protein>
    <recommendedName>
        <fullName>Probable nicotinate-nucleotide adenylyltransferase</fullName>
        <ecNumber>2.7.7.18</ecNumber>
    </recommendedName>
    <alternativeName>
        <fullName>Deamido-NAD(+) diphosphorylase</fullName>
    </alternativeName>
    <alternativeName>
        <fullName>Deamido-NAD(+) pyrophosphorylase</fullName>
    </alternativeName>
    <alternativeName>
        <fullName>Nicotinate mononucleotide adenylyltransferase</fullName>
        <shortName>NaMN adenylyltransferase</shortName>
    </alternativeName>
</protein>
<accession>Q9KD91</accession>
<organism>
    <name type="scientific">Halalkalibacterium halodurans (strain ATCC BAA-125 / DSM 18197 / FERM 7344 / JCM 9153 / C-125)</name>
    <name type="common">Bacillus halodurans</name>
    <dbReference type="NCBI Taxonomy" id="272558"/>
    <lineage>
        <taxon>Bacteria</taxon>
        <taxon>Bacillati</taxon>
        <taxon>Bacillota</taxon>
        <taxon>Bacilli</taxon>
        <taxon>Bacillales</taxon>
        <taxon>Bacillaceae</taxon>
        <taxon>Halalkalibacterium (ex Joshi et al. 2022)</taxon>
    </lineage>
</organism>
<evidence type="ECO:0000250" key="1"/>
<evidence type="ECO:0000305" key="2"/>
<feature type="chain" id="PRO_0000181383" description="Probable nicotinate-nucleotide adenylyltransferase">
    <location>
        <begin position="1"/>
        <end position="207"/>
    </location>
</feature>
<name>NADD_HALH5</name>